<sequence>MTDLTTSDSLQPAWQTRDHLDDPVIGELSNRFGPEAFVVQATRTGMPVVWVKREQLLEVMSFLRKQPKPYVMLFDLHGVDERLRTHSQGLPDADFSVFYHLLSIERNRDIMLKVALSEKDLHVSTATKIFPNANWYERETWEMFGITFDGHPHLTRIMMPQSWEGHPLRKDYPARATEFDPYVLTKQKEDLEMESLTFKPEDWGMKRGTENEDFMFLNLGPNHPSSHGAFRIVLQLDGEEIIDCVPDVGYHHRGAEKMGERQSWHSYIPYTDRIEYLGGCVNEMPYVLAVEKLAGIVVPDRVNTIRVMLSELFRINSHLLYISTFIQDVGAMTPVFFAFTDRQKVYDVIEAITGFRMHPAWFRIGGVAHDLPRGWERLLRDFLDWMPKRLDSYVKAALQNSILKGRSVGVAAYNAKEALEWGVTGAGLRATGVEFDVRKWRPYSGYENFDFEVPVGNNGDCYDRVMLKVEELRQSLRILEQCYKNMPEGPFKADHPLTTPPPKERTLQHIETLITHFLQVSWGPVMPANESFQMIEATKGINSYYLTSDGSTMSYRTRIRTPSYAHLQQIPSVIRGSLVSDLIVYLGSIDFVMSDVDR</sequence>
<keyword id="KW-0997">Cell inner membrane</keyword>
<keyword id="KW-1003">Cell membrane</keyword>
<keyword id="KW-0472">Membrane</keyword>
<keyword id="KW-0511">Multifunctional enzyme</keyword>
<keyword id="KW-0520">NAD</keyword>
<keyword id="KW-0874">Quinone</keyword>
<keyword id="KW-1278">Translocase</keyword>
<keyword id="KW-0813">Transport</keyword>
<keyword id="KW-0830">Ubiquinone</keyword>
<feature type="chain" id="PRO_0000358707" description="NADH-quinone oxidoreductase subunit C/D">
    <location>
        <begin position="1"/>
        <end position="598"/>
    </location>
</feature>
<feature type="region of interest" description="NADH dehydrogenase I subunit C" evidence="1">
    <location>
        <begin position="1"/>
        <end position="189"/>
    </location>
</feature>
<feature type="region of interest" description="NADH dehydrogenase I subunit D" evidence="1">
    <location>
        <begin position="213"/>
        <end position="598"/>
    </location>
</feature>
<evidence type="ECO:0000255" key="1">
    <source>
        <dbReference type="HAMAP-Rule" id="MF_01359"/>
    </source>
</evidence>
<accession>A9R6L8</accession>
<organism>
    <name type="scientific">Yersinia pestis bv. Antiqua (strain Angola)</name>
    <dbReference type="NCBI Taxonomy" id="349746"/>
    <lineage>
        <taxon>Bacteria</taxon>
        <taxon>Pseudomonadati</taxon>
        <taxon>Pseudomonadota</taxon>
        <taxon>Gammaproteobacteria</taxon>
        <taxon>Enterobacterales</taxon>
        <taxon>Yersiniaceae</taxon>
        <taxon>Yersinia</taxon>
    </lineage>
</organism>
<comment type="function">
    <text evidence="1">NDH-1 shuttles electrons from NADH, via FMN and iron-sulfur (Fe-S) centers, to quinones in the respiratory chain. The immediate electron acceptor for the enzyme in this species is believed to be ubiquinone. Couples the redox reaction to proton translocation (for every two electrons transferred, four hydrogen ions are translocated across the cytoplasmic membrane), and thus conserves the redox energy in a proton gradient.</text>
</comment>
<comment type="catalytic activity">
    <reaction evidence="1">
        <text>a quinone + NADH + 5 H(+)(in) = a quinol + NAD(+) + 4 H(+)(out)</text>
        <dbReference type="Rhea" id="RHEA:57888"/>
        <dbReference type="ChEBI" id="CHEBI:15378"/>
        <dbReference type="ChEBI" id="CHEBI:24646"/>
        <dbReference type="ChEBI" id="CHEBI:57540"/>
        <dbReference type="ChEBI" id="CHEBI:57945"/>
        <dbReference type="ChEBI" id="CHEBI:132124"/>
    </reaction>
</comment>
<comment type="subunit">
    <text evidence="1">NDH-1 is composed of 13 different subunits. Subunits NuoB, CD, E, F, and G constitute the peripheral sector of the complex.</text>
</comment>
<comment type="subcellular location">
    <subcellularLocation>
        <location evidence="1">Cell inner membrane</location>
        <topology evidence="1">Peripheral membrane protein</topology>
        <orientation evidence="1">Cytoplasmic side</orientation>
    </subcellularLocation>
</comment>
<comment type="similarity">
    <text evidence="1">In the N-terminal section; belongs to the complex I 30 kDa subunit family.</text>
</comment>
<comment type="similarity">
    <text evidence="1">In the C-terminal section; belongs to the complex I 49 kDa subunit family.</text>
</comment>
<protein>
    <recommendedName>
        <fullName evidence="1">NADH-quinone oxidoreductase subunit C/D</fullName>
        <ecNumber evidence="1">7.1.1.-</ecNumber>
    </recommendedName>
    <alternativeName>
        <fullName evidence="1">NADH dehydrogenase I subunit C/D</fullName>
    </alternativeName>
    <alternativeName>
        <fullName evidence="1">NDH-1 subunit C/D</fullName>
    </alternativeName>
</protein>
<reference key="1">
    <citation type="journal article" date="2010" name="J. Bacteriol.">
        <title>Genome sequence of the deep-rooted Yersinia pestis strain Angola reveals new insights into the evolution and pangenome of the plague bacterium.</title>
        <authorList>
            <person name="Eppinger M."/>
            <person name="Worsham P.L."/>
            <person name="Nikolich M.P."/>
            <person name="Riley D.R."/>
            <person name="Sebastian Y."/>
            <person name="Mou S."/>
            <person name="Achtman M."/>
            <person name="Lindler L.E."/>
            <person name="Ravel J."/>
        </authorList>
    </citation>
    <scope>NUCLEOTIDE SEQUENCE [LARGE SCALE GENOMIC DNA]</scope>
    <source>
        <strain>Angola</strain>
    </source>
</reference>
<gene>
    <name evidence="1" type="primary">nuoC</name>
    <name evidence="1" type="synonym">nuoCD</name>
    <name evidence="1" type="synonym">nuoD</name>
    <name type="ordered locus">YpAngola_A1814</name>
</gene>
<dbReference type="EC" id="7.1.1.-" evidence="1"/>
<dbReference type="EMBL" id="CP000901">
    <property type="protein sequence ID" value="ABX88307.1"/>
    <property type="molecule type" value="Genomic_DNA"/>
</dbReference>
<dbReference type="RefSeq" id="WP_012229500.1">
    <property type="nucleotide sequence ID" value="NC_010159.1"/>
</dbReference>
<dbReference type="SMR" id="A9R6L8"/>
<dbReference type="KEGG" id="ypg:YpAngola_A1814"/>
<dbReference type="PATRIC" id="fig|349746.12.peg.2790"/>
<dbReference type="GO" id="GO:0030964">
    <property type="term" value="C:NADH dehydrogenase complex"/>
    <property type="evidence" value="ECO:0007669"/>
    <property type="project" value="InterPro"/>
</dbReference>
<dbReference type="GO" id="GO:0005886">
    <property type="term" value="C:plasma membrane"/>
    <property type="evidence" value="ECO:0007669"/>
    <property type="project" value="UniProtKB-SubCell"/>
</dbReference>
<dbReference type="GO" id="GO:0051287">
    <property type="term" value="F:NAD binding"/>
    <property type="evidence" value="ECO:0007669"/>
    <property type="project" value="InterPro"/>
</dbReference>
<dbReference type="GO" id="GO:0008137">
    <property type="term" value="F:NADH dehydrogenase (ubiquinone) activity"/>
    <property type="evidence" value="ECO:0007669"/>
    <property type="project" value="InterPro"/>
</dbReference>
<dbReference type="GO" id="GO:0050136">
    <property type="term" value="F:NADH:ubiquinone reductase (non-electrogenic) activity"/>
    <property type="evidence" value="ECO:0007669"/>
    <property type="project" value="UniProtKB-UniRule"/>
</dbReference>
<dbReference type="GO" id="GO:0048038">
    <property type="term" value="F:quinone binding"/>
    <property type="evidence" value="ECO:0007669"/>
    <property type="project" value="UniProtKB-KW"/>
</dbReference>
<dbReference type="FunFam" id="1.10.645.10:FF:000001">
    <property type="entry name" value="NADH-quinone oxidoreductase subunit C/D"/>
    <property type="match status" value="1"/>
</dbReference>
<dbReference type="FunFam" id="3.30.460.80:FF:000001">
    <property type="entry name" value="NADH-quinone oxidoreductase subunit C/D"/>
    <property type="match status" value="1"/>
</dbReference>
<dbReference type="Gene3D" id="1.10.645.10">
    <property type="entry name" value="Cytochrome-c3 Hydrogenase, chain B"/>
    <property type="match status" value="1"/>
</dbReference>
<dbReference type="Gene3D" id="3.30.460.80">
    <property type="entry name" value="NADH:ubiquinone oxidoreductase, 30kDa subunit"/>
    <property type="match status" value="1"/>
</dbReference>
<dbReference type="HAMAP" id="MF_01357">
    <property type="entry name" value="NDH1_NuoC"/>
    <property type="match status" value="1"/>
</dbReference>
<dbReference type="HAMAP" id="MF_01359">
    <property type="entry name" value="NDH1_NuoCD_1"/>
    <property type="match status" value="1"/>
</dbReference>
<dbReference type="HAMAP" id="MF_01358">
    <property type="entry name" value="NDH1_NuoD"/>
    <property type="match status" value="1"/>
</dbReference>
<dbReference type="InterPro" id="IPR010218">
    <property type="entry name" value="NADH_DH_suC"/>
</dbReference>
<dbReference type="InterPro" id="IPR023062">
    <property type="entry name" value="NADH_DH_suCD"/>
</dbReference>
<dbReference type="InterPro" id="IPR001135">
    <property type="entry name" value="NADH_Q_OxRdtase_suD"/>
</dbReference>
<dbReference type="InterPro" id="IPR037232">
    <property type="entry name" value="NADH_quin_OxRdtase_su_C/D-like"/>
</dbReference>
<dbReference type="InterPro" id="IPR001268">
    <property type="entry name" value="NADH_UbQ_OxRdtase_30kDa_su"/>
</dbReference>
<dbReference type="InterPro" id="IPR014029">
    <property type="entry name" value="NADH_UbQ_OxRdtase_49kDa_CS"/>
</dbReference>
<dbReference type="InterPro" id="IPR022885">
    <property type="entry name" value="NDH1_su_D/H"/>
</dbReference>
<dbReference type="InterPro" id="IPR029014">
    <property type="entry name" value="NiFe-Hase_large"/>
</dbReference>
<dbReference type="NCBIfam" id="TIGR01961">
    <property type="entry name" value="NuoC_fam"/>
    <property type="match status" value="1"/>
</dbReference>
<dbReference type="NCBIfam" id="TIGR01962">
    <property type="entry name" value="NuoD"/>
    <property type="match status" value="1"/>
</dbReference>
<dbReference type="NCBIfam" id="NF004739">
    <property type="entry name" value="PRK06075.1"/>
    <property type="match status" value="1"/>
</dbReference>
<dbReference type="NCBIfam" id="NF008728">
    <property type="entry name" value="PRK11742.1"/>
    <property type="match status" value="1"/>
</dbReference>
<dbReference type="PANTHER" id="PTHR11993:SF45">
    <property type="entry name" value="NADH-QUINONE OXIDOREDUCTASE SUBUNIT C_D"/>
    <property type="match status" value="1"/>
</dbReference>
<dbReference type="PANTHER" id="PTHR11993">
    <property type="entry name" value="NADH-UBIQUINONE OXIDOREDUCTASE 49 KDA SUBUNIT"/>
    <property type="match status" value="1"/>
</dbReference>
<dbReference type="Pfam" id="PF00329">
    <property type="entry name" value="Complex1_30kDa"/>
    <property type="match status" value="1"/>
</dbReference>
<dbReference type="Pfam" id="PF00346">
    <property type="entry name" value="Complex1_49kDa"/>
    <property type="match status" value="1"/>
</dbReference>
<dbReference type="SUPFAM" id="SSF56762">
    <property type="entry name" value="HydB/Nqo4-like"/>
    <property type="match status" value="1"/>
</dbReference>
<dbReference type="SUPFAM" id="SSF143243">
    <property type="entry name" value="Nqo5-like"/>
    <property type="match status" value="1"/>
</dbReference>
<dbReference type="PROSITE" id="PS00535">
    <property type="entry name" value="COMPLEX1_49K"/>
    <property type="match status" value="1"/>
</dbReference>
<proteinExistence type="inferred from homology"/>
<name>NUOCD_YERPG</name>